<evidence type="ECO:0000255" key="1">
    <source>
        <dbReference type="HAMAP-Rule" id="MF_00465"/>
    </source>
</evidence>
<organism>
    <name type="scientific">Escherichia coli (strain K12 / DH10B)</name>
    <dbReference type="NCBI Taxonomy" id="316385"/>
    <lineage>
        <taxon>Bacteria</taxon>
        <taxon>Pseudomonadati</taxon>
        <taxon>Pseudomonadota</taxon>
        <taxon>Gammaproteobacteria</taxon>
        <taxon>Enterobacterales</taxon>
        <taxon>Enterobacteriaceae</taxon>
        <taxon>Escherichia</taxon>
    </lineage>
</organism>
<protein>
    <recommendedName>
        <fullName evidence="1">S-adenosylmethionine decarboxylase proenzyme</fullName>
        <shortName evidence="1">AdoMetDC</shortName>
        <shortName evidence="1">SAMDC</shortName>
        <ecNumber evidence="1">4.1.1.50</ecNumber>
    </recommendedName>
    <component>
        <recommendedName>
            <fullName evidence="1">S-adenosylmethionine decarboxylase beta chain</fullName>
        </recommendedName>
    </component>
    <component>
        <recommendedName>
            <fullName evidence="1">S-adenosylmethionine decarboxylase alpha chain</fullName>
        </recommendedName>
    </component>
</protein>
<proteinExistence type="inferred from homology"/>
<feature type="chain" id="PRO_0000364373" description="S-adenosylmethionine decarboxylase beta chain" evidence="1">
    <location>
        <begin position="1"/>
        <end position="111"/>
    </location>
</feature>
<feature type="chain" id="PRO_0000364374" description="S-adenosylmethionine decarboxylase alpha chain" evidence="1">
    <location>
        <begin position="112"/>
        <end position="264"/>
    </location>
</feature>
<feature type="active site" description="Schiff-base intermediate with substrate; via pyruvic acid" evidence="1">
    <location>
        <position position="112"/>
    </location>
</feature>
<feature type="active site" description="Proton acceptor; for processing activity" evidence="1">
    <location>
        <position position="117"/>
    </location>
</feature>
<feature type="active site" description="Proton donor; for catalytic activity" evidence="1">
    <location>
        <position position="140"/>
    </location>
</feature>
<feature type="site" description="Cleavage (non-hydrolytic); by autolysis" evidence="1">
    <location>
        <begin position="111"/>
        <end position="112"/>
    </location>
</feature>
<feature type="modified residue" description="Pyruvic acid (Ser); by autocatalysis" evidence="1">
    <location>
        <position position="112"/>
    </location>
</feature>
<reference key="1">
    <citation type="journal article" date="2008" name="J. Bacteriol.">
        <title>The complete genome sequence of Escherichia coli DH10B: insights into the biology of a laboratory workhorse.</title>
        <authorList>
            <person name="Durfee T."/>
            <person name="Nelson R."/>
            <person name="Baldwin S."/>
            <person name="Plunkett G. III"/>
            <person name="Burland V."/>
            <person name="Mau B."/>
            <person name="Petrosino J.F."/>
            <person name="Qin X."/>
            <person name="Muzny D.M."/>
            <person name="Ayele M."/>
            <person name="Gibbs R.A."/>
            <person name="Csorgo B."/>
            <person name="Posfai G."/>
            <person name="Weinstock G.M."/>
            <person name="Blattner F.R."/>
        </authorList>
    </citation>
    <scope>NUCLEOTIDE SEQUENCE [LARGE SCALE GENOMIC DNA]</scope>
    <source>
        <strain>K12 / DH10B</strain>
    </source>
</reference>
<dbReference type="EC" id="4.1.1.50" evidence="1"/>
<dbReference type="EMBL" id="CP000948">
    <property type="protein sequence ID" value="ACB01299.1"/>
    <property type="molecule type" value="Genomic_DNA"/>
</dbReference>
<dbReference type="RefSeq" id="WP_000734287.1">
    <property type="nucleotide sequence ID" value="NC_010473.1"/>
</dbReference>
<dbReference type="GeneID" id="93777316"/>
<dbReference type="KEGG" id="ecd:ECDH10B_0100"/>
<dbReference type="HOGENOM" id="CLU_092007_0_0_6"/>
<dbReference type="UniPathway" id="UPA00331">
    <property type="reaction ID" value="UER00451"/>
</dbReference>
<dbReference type="GO" id="GO:0005829">
    <property type="term" value="C:cytosol"/>
    <property type="evidence" value="ECO:0007669"/>
    <property type="project" value="TreeGrafter"/>
</dbReference>
<dbReference type="GO" id="GO:0004014">
    <property type="term" value="F:adenosylmethionine decarboxylase activity"/>
    <property type="evidence" value="ECO:0007669"/>
    <property type="project" value="UniProtKB-UniRule"/>
</dbReference>
<dbReference type="GO" id="GO:0008295">
    <property type="term" value="P:spermidine biosynthetic process"/>
    <property type="evidence" value="ECO:0007669"/>
    <property type="project" value="UniProtKB-UniRule"/>
</dbReference>
<dbReference type="FunFam" id="3.60.90.10:FF:000001">
    <property type="entry name" value="S-adenosylmethionine decarboxylase proenzyme"/>
    <property type="match status" value="1"/>
</dbReference>
<dbReference type="Gene3D" id="3.60.90.10">
    <property type="entry name" value="S-adenosylmethionine decarboxylase"/>
    <property type="match status" value="1"/>
</dbReference>
<dbReference type="HAMAP" id="MF_00465">
    <property type="entry name" value="AdoMetDC_2"/>
    <property type="match status" value="1"/>
</dbReference>
<dbReference type="InterPro" id="IPR003826">
    <property type="entry name" value="AdoMetDC_fam_prok"/>
</dbReference>
<dbReference type="InterPro" id="IPR009165">
    <property type="entry name" value="S-AdoMet_deCO2ase_bac"/>
</dbReference>
<dbReference type="InterPro" id="IPR016067">
    <property type="entry name" value="S-AdoMet_deCO2ase_core"/>
</dbReference>
<dbReference type="NCBIfam" id="TIGR03331">
    <property type="entry name" value="SAM_DCase_Eco"/>
    <property type="match status" value="1"/>
</dbReference>
<dbReference type="PANTHER" id="PTHR33866">
    <property type="entry name" value="S-ADENOSYLMETHIONINE DECARBOXYLASE PROENZYME"/>
    <property type="match status" value="1"/>
</dbReference>
<dbReference type="PANTHER" id="PTHR33866:SF1">
    <property type="entry name" value="S-ADENOSYLMETHIONINE DECARBOXYLASE PROENZYME"/>
    <property type="match status" value="1"/>
</dbReference>
<dbReference type="Pfam" id="PF02675">
    <property type="entry name" value="AdoMet_dc"/>
    <property type="match status" value="1"/>
</dbReference>
<dbReference type="PIRSF" id="PIRSF001356">
    <property type="entry name" value="SAM_decarboxylas"/>
    <property type="match status" value="1"/>
</dbReference>
<dbReference type="SUPFAM" id="SSF56276">
    <property type="entry name" value="S-adenosylmethionine decarboxylase"/>
    <property type="match status" value="1"/>
</dbReference>
<comment type="function">
    <text evidence="1">Catalyzes the decarboxylation of S-adenosylmethionine to S-adenosylmethioninamine (dcAdoMet), the propylamine donor required for the synthesis of the polyamines spermine and spermidine from the diamine putrescine.</text>
</comment>
<comment type="catalytic activity">
    <reaction evidence="1">
        <text>S-adenosyl-L-methionine + H(+) = S-adenosyl 3-(methylsulfanyl)propylamine + CO2</text>
        <dbReference type="Rhea" id="RHEA:15981"/>
        <dbReference type="ChEBI" id="CHEBI:15378"/>
        <dbReference type="ChEBI" id="CHEBI:16526"/>
        <dbReference type="ChEBI" id="CHEBI:57443"/>
        <dbReference type="ChEBI" id="CHEBI:59789"/>
        <dbReference type="EC" id="4.1.1.50"/>
    </reaction>
</comment>
<comment type="cofactor">
    <cofactor evidence="1">
        <name>pyruvate</name>
        <dbReference type="ChEBI" id="CHEBI:15361"/>
    </cofactor>
    <text evidence="1">Binds 1 pyruvoyl group covalently per subunit.</text>
</comment>
<comment type="pathway">
    <text evidence="1">Amine and polyamine biosynthesis; S-adenosylmethioninamine biosynthesis; S-adenosylmethioninamine from S-adenosyl-L-methionine: step 1/1.</text>
</comment>
<comment type="subunit">
    <text evidence="1">Heterooctamer of four alpha and four beta chains arranged as a tetramer of alpha/beta heterodimers.</text>
</comment>
<comment type="PTM">
    <text evidence="1">Is synthesized initially as an inactive proenzyme. Formation of the active enzyme involves a self-maturation process in which the active site pyruvoyl group is generated from an internal serine residue via an autocatalytic post-translational modification. Two non-identical subunits are generated from the proenzyme in this reaction, and the pyruvate is formed at the N-terminus of the alpha chain, which is derived from the carboxyl end of the proenzyme. The post-translation cleavage follows an unusual pathway, termed non-hydrolytic serinolysis, in which the side chain hydroxyl group of the serine supplies its oxygen atom to form the C-terminus of the beta chain, while the remainder of the serine residue undergoes an oxidative deamination to produce ammonia and the pyruvoyl group blocking the N-terminus of the alpha chain.</text>
</comment>
<comment type="similarity">
    <text evidence="1">Belongs to the prokaryotic AdoMetDC family. Type 2 subfamily.</text>
</comment>
<gene>
    <name evidence="1" type="primary">speD</name>
    <name type="ordered locus">ECDH10B_0100</name>
</gene>
<keyword id="KW-0068">Autocatalytic cleavage</keyword>
<keyword id="KW-0210">Decarboxylase</keyword>
<keyword id="KW-0456">Lyase</keyword>
<keyword id="KW-0620">Polyamine biosynthesis</keyword>
<keyword id="KW-0670">Pyruvate</keyword>
<keyword id="KW-0949">S-adenosyl-L-methionine</keyword>
<keyword id="KW-0704">Schiff base</keyword>
<keyword id="KW-0745">Spermidine biosynthesis</keyword>
<keyword id="KW-0865">Zymogen</keyword>
<name>SPED_ECODH</name>
<sequence>MKKLKLHGFNNLTKSLSFCIYDICYAKTAEERDGYIAYIDELYNANRLTEILSETCSIIGANILNIARQDYEPQGASVTILVSEEPVDPKLIDKTEHPGPLPETVVAHLDKSHICVHTYPESHPEGGLCTFRADIEVSTCGVISPLKALNYLIHQLESDIVTIDYRVRGFTRDINGMKHFIDHEINSIQNFMSDDMKALYDMVDVNVYQENIFHTKMLLKEFDLKHYMFHTKPEDLTDSERQEITAALWKEMREIYYGRNMPAV</sequence>
<accession>B1XC95</accession>